<feature type="chain" id="PRO_0000080772" description="Sodium-dependent phosphate transporter 1">
    <location>
        <begin position="1"/>
        <end position="681"/>
    </location>
</feature>
<feature type="transmembrane region" description="Helical" evidence="2">
    <location>
        <begin position="25"/>
        <end position="45"/>
    </location>
</feature>
<feature type="transmembrane region" description="Helical" evidence="2">
    <location>
        <begin position="66"/>
        <end position="86"/>
    </location>
</feature>
<feature type="transmembrane region" description="Helical" evidence="2">
    <location>
        <begin position="106"/>
        <end position="126"/>
    </location>
</feature>
<feature type="transmembrane region" description="Helical" evidence="2">
    <location>
        <begin position="162"/>
        <end position="182"/>
    </location>
</feature>
<feature type="transmembrane region" description="Helical" evidence="2">
    <location>
        <begin position="201"/>
        <end position="221"/>
    </location>
</feature>
<feature type="transmembrane region" description="Helical" evidence="2">
    <location>
        <begin position="234"/>
        <end position="254"/>
    </location>
</feature>
<feature type="transmembrane region" description="Helical" evidence="2">
    <location>
        <begin position="514"/>
        <end position="534"/>
    </location>
</feature>
<feature type="transmembrane region" description="Helical" evidence="2">
    <location>
        <begin position="561"/>
        <end position="581"/>
    </location>
</feature>
<feature type="transmembrane region" description="Helical" evidence="2">
    <location>
        <begin position="602"/>
        <end position="622"/>
    </location>
</feature>
<feature type="transmembrane region" description="Helical" evidence="2">
    <location>
        <begin position="652"/>
        <end position="672"/>
    </location>
</feature>
<feature type="region of interest" description="Disordered" evidence="3">
    <location>
        <begin position="266"/>
        <end position="295"/>
    </location>
</feature>
<feature type="region of interest" description="A">
    <location>
        <begin position="553"/>
        <end position="560"/>
    </location>
</feature>
<feature type="compositionally biased region" description="Basic and acidic residues" evidence="3">
    <location>
        <begin position="275"/>
        <end position="295"/>
    </location>
</feature>
<feature type="modified residue" description="Phosphoserine" evidence="10">
    <location>
        <position position="269"/>
    </location>
</feature>
<feature type="modified residue" description="Phosphoserine" evidence="10">
    <location>
        <position position="273"/>
    </location>
</feature>
<feature type="mutagenesis site" description="Confers virus infectibility." evidence="6">
    <original>KQEASTKA</original>
    <variation>DTGDVSSKV</variation>
    <location>
        <begin position="553"/>
        <end position="560"/>
    </location>
</feature>
<feature type="mutagenesis site" description="Confers virus infectibility." evidence="6">
    <original>KQE</original>
    <variation>DTGD</variation>
    <location>
        <begin position="553"/>
        <end position="555"/>
    </location>
</feature>
<feature type="mutagenesis site" description="Confers virus infectibility." evidence="6">
    <original>K</original>
    <variation>DT</variation>
    <location>
        <position position="553"/>
    </location>
</feature>
<feature type="sequence conflict" description="In Ref. 2." evidence="9" ref="2">
    <original>R</original>
    <variation>H</variation>
    <location>
        <position position="190"/>
    </location>
</feature>
<feature type="sequence conflict" description="In Ref. 2." evidence="9" ref="2">
    <original>T</original>
    <variation>A</variation>
    <location>
        <position position="368"/>
    </location>
</feature>
<feature type="sequence conflict" description="In Ref. 2." evidence="9" ref="2">
    <original>D</original>
    <variation>E</variation>
    <location>
        <position position="446"/>
    </location>
</feature>
<feature type="sequence conflict" description="In Ref. 6; AAH15085." evidence="9" ref="6">
    <original>E</original>
    <variation>G</variation>
    <location>
        <position position="490"/>
    </location>
</feature>
<feature type="sequence conflict" description="In Ref. 4; BAE33298." evidence="9" ref="4">
    <original>L</original>
    <variation>P</variation>
    <location>
        <position position="568"/>
    </location>
</feature>
<feature type="sequence conflict" description="In Ref. 2." evidence="9" ref="2">
    <original>Y</original>
    <variation>T</variation>
    <location>
        <position position="569"/>
    </location>
</feature>
<feature type="sequence conflict" description="In Ref. 2." evidence="9" ref="2">
    <original>R</original>
    <variation>I</variation>
    <location>
        <position position="639"/>
    </location>
</feature>
<feature type="sequence conflict" description="In Ref. 2." evidence="9" ref="2">
    <original>A</original>
    <variation>AA</variation>
    <location>
        <position position="672"/>
    </location>
</feature>
<dbReference type="EMBL" id="M73696">
    <property type="protein sequence ID" value="AAA74887.1"/>
    <property type="molecule type" value="mRNA"/>
</dbReference>
<dbReference type="EMBL" id="AF172634">
    <property type="protein sequence ID" value="AAF45041.1"/>
    <property type="molecule type" value="Genomic_DNA"/>
</dbReference>
<dbReference type="EMBL" id="AF172628">
    <property type="protein sequence ID" value="AAF45041.1"/>
    <property type="status" value="JOINED"/>
    <property type="molecule type" value="Genomic_DNA"/>
</dbReference>
<dbReference type="EMBL" id="AF172629">
    <property type="protein sequence ID" value="AAF45041.1"/>
    <property type="status" value="JOINED"/>
    <property type="molecule type" value="Genomic_DNA"/>
</dbReference>
<dbReference type="EMBL" id="AF172630">
    <property type="protein sequence ID" value="AAF45041.1"/>
    <property type="status" value="JOINED"/>
    <property type="molecule type" value="Genomic_DNA"/>
</dbReference>
<dbReference type="EMBL" id="AF172631">
    <property type="protein sequence ID" value="AAF45041.1"/>
    <property type="status" value="JOINED"/>
    <property type="molecule type" value="Genomic_DNA"/>
</dbReference>
<dbReference type="EMBL" id="AF172632">
    <property type="protein sequence ID" value="AAF45041.1"/>
    <property type="status" value="JOINED"/>
    <property type="molecule type" value="Genomic_DNA"/>
</dbReference>
<dbReference type="EMBL" id="AF172633">
    <property type="protein sequence ID" value="AAF45041.1"/>
    <property type="status" value="JOINED"/>
    <property type="molecule type" value="Genomic_DNA"/>
</dbReference>
<dbReference type="EMBL" id="AK035898">
    <property type="protein sequence ID" value="BAC29234.1"/>
    <property type="status" value="ALT_SEQ"/>
    <property type="molecule type" value="mRNA"/>
</dbReference>
<dbReference type="EMBL" id="AK155506">
    <property type="protein sequence ID" value="BAE33298.1"/>
    <property type="molecule type" value="mRNA"/>
</dbReference>
<dbReference type="EMBL" id="AL772347">
    <property type="status" value="NOT_ANNOTATED_CDS"/>
    <property type="molecule type" value="Genomic_DNA"/>
</dbReference>
<dbReference type="EMBL" id="BC015085">
    <property type="protein sequence ID" value="AAH15085.1"/>
    <property type="molecule type" value="mRNA"/>
</dbReference>
<dbReference type="CCDS" id="CCDS16722.1"/>
<dbReference type="PIR" id="S27868">
    <property type="entry name" value="S27868"/>
</dbReference>
<dbReference type="RefSeq" id="NP_001153065.1">
    <property type="nucleotide sequence ID" value="NM_001159593.1"/>
</dbReference>
<dbReference type="RefSeq" id="NP_056562.1">
    <property type="nucleotide sequence ID" value="NM_015747.3"/>
</dbReference>
<dbReference type="RefSeq" id="XP_036015794.1">
    <property type="nucleotide sequence ID" value="XM_036159901.1"/>
</dbReference>
<dbReference type="SMR" id="Q61609"/>
<dbReference type="BioGRID" id="203294">
    <property type="interactions" value="6"/>
</dbReference>
<dbReference type="FunCoup" id="Q61609">
    <property type="interactions" value="1030"/>
</dbReference>
<dbReference type="STRING" id="10090.ENSMUSP00000028880"/>
<dbReference type="GlyGen" id="Q61609">
    <property type="glycosylation" value="2 sites, 1 N-linked glycan (1 site)"/>
</dbReference>
<dbReference type="iPTMnet" id="Q61609"/>
<dbReference type="PhosphoSitePlus" id="Q61609"/>
<dbReference type="PaxDb" id="10090-ENSMUSP00000028880"/>
<dbReference type="PeptideAtlas" id="Q61609"/>
<dbReference type="ProteomicsDB" id="260882"/>
<dbReference type="Antibodypedia" id="33281">
    <property type="antibodies" value="174 antibodies from 29 providers"/>
</dbReference>
<dbReference type="DNASU" id="20515"/>
<dbReference type="Ensembl" id="ENSMUST00000028880.10">
    <property type="protein sequence ID" value="ENSMUSP00000028880.4"/>
    <property type="gene ID" value="ENSMUSG00000027397.15"/>
</dbReference>
<dbReference type="Ensembl" id="ENSMUST00000110315.2">
    <property type="protein sequence ID" value="ENSMUSP00000105944.2"/>
    <property type="gene ID" value="ENSMUSG00000027397.15"/>
</dbReference>
<dbReference type="GeneID" id="20515"/>
<dbReference type="KEGG" id="mmu:20515"/>
<dbReference type="UCSC" id="uc008mhl.2">
    <property type="organism name" value="mouse"/>
</dbReference>
<dbReference type="AGR" id="MGI:108392"/>
<dbReference type="CTD" id="6574"/>
<dbReference type="MGI" id="MGI:108392">
    <property type="gene designation" value="Slc20a1"/>
</dbReference>
<dbReference type="VEuPathDB" id="HostDB:ENSMUSG00000027397"/>
<dbReference type="eggNOG" id="KOG2493">
    <property type="taxonomic scope" value="Eukaryota"/>
</dbReference>
<dbReference type="GeneTree" id="ENSGT00390000014879"/>
<dbReference type="HOGENOM" id="CLU_015355_3_1_1"/>
<dbReference type="InParanoid" id="Q61609"/>
<dbReference type="OMA" id="AWKTGNA"/>
<dbReference type="OrthoDB" id="260807at2759"/>
<dbReference type="PhylomeDB" id="Q61609"/>
<dbReference type="TreeFam" id="TF314426"/>
<dbReference type="BRENDA" id="7.3.2.1">
    <property type="organism ID" value="3474"/>
</dbReference>
<dbReference type="Reactome" id="R-MMU-427652">
    <property type="pathway name" value="Sodium-coupled phosphate cotransporters"/>
</dbReference>
<dbReference type="BioGRID-ORCS" id="20515">
    <property type="hits" value="6 hits in 80 CRISPR screens"/>
</dbReference>
<dbReference type="ChiTaRS" id="Slc20a1">
    <property type="organism name" value="mouse"/>
</dbReference>
<dbReference type="PRO" id="PR:Q61609"/>
<dbReference type="Proteomes" id="UP000000589">
    <property type="component" value="Chromosome 2"/>
</dbReference>
<dbReference type="RNAct" id="Q61609">
    <property type="molecule type" value="protein"/>
</dbReference>
<dbReference type="Bgee" id="ENSMUSG00000027397">
    <property type="expression patterns" value="Expressed in pontine nuclear group and 272 other cell types or tissues"/>
</dbReference>
<dbReference type="ExpressionAtlas" id="Q61609">
    <property type="expression patterns" value="baseline and differential"/>
</dbReference>
<dbReference type="GO" id="GO:0005886">
    <property type="term" value="C:plasma membrane"/>
    <property type="evidence" value="ECO:0000314"/>
    <property type="project" value="MGI"/>
</dbReference>
<dbReference type="GO" id="GO:0005316">
    <property type="term" value="F:high-affinity phosphate:sodium symporter activity"/>
    <property type="evidence" value="ECO:0007669"/>
    <property type="project" value="Ensembl"/>
</dbReference>
<dbReference type="GO" id="GO:0005436">
    <property type="term" value="F:sodium:phosphate symporter activity"/>
    <property type="evidence" value="ECO:0000250"/>
    <property type="project" value="UniProtKB"/>
</dbReference>
<dbReference type="GO" id="GO:0031214">
    <property type="term" value="P:biomineral tissue development"/>
    <property type="evidence" value="ECO:0000315"/>
    <property type="project" value="MGI"/>
</dbReference>
<dbReference type="GO" id="GO:0008283">
    <property type="term" value="P:cell population proliferation"/>
    <property type="evidence" value="ECO:0000250"/>
    <property type="project" value="UniProtKB"/>
</dbReference>
<dbReference type="GO" id="GO:0006817">
    <property type="term" value="P:phosphate ion transport"/>
    <property type="evidence" value="ECO:0007669"/>
    <property type="project" value="UniProtKB-KW"/>
</dbReference>
<dbReference type="InterPro" id="IPR001204">
    <property type="entry name" value="Phos_transporter"/>
</dbReference>
<dbReference type="PANTHER" id="PTHR11101">
    <property type="entry name" value="PHOSPHATE TRANSPORTER"/>
    <property type="match status" value="1"/>
</dbReference>
<dbReference type="PANTHER" id="PTHR11101:SF46">
    <property type="entry name" value="SODIUM-DEPENDENT PHOSPHATE TRANSPORTER 1"/>
    <property type="match status" value="1"/>
</dbReference>
<dbReference type="Pfam" id="PF01384">
    <property type="entry name" value="PHO4"/>
    <property type="match status" value="1"/>
</dbReference>
<proteinExistence type="evidence at protein level"/>
<reference key="1">
    <citation type="journal article" date="1992" name="J. Virol.">
        <title>GLVR1, a receptor for gibbon ape leukemia virus, is homologous to a phosphate permease of Neurospora crassa and is expressed at high levels in the brain and thymus.</title>
        <authorList>
            <person name="Johann S.V."/>
            <person name="Gibbons J.J."/>
            <person name="O'Hara B."/>
        </authorList>
    </citation>
    <scope>NUCLEOTIDE SEQUENCE [MRNA]</scope>
</reference>
<reference key="2">
    <citation type="journal article" date="1994" name="J. Gen. Virol.">
        <title>Comparison of cDNAs encoding the gibbon ape leukaemia virus receptor from susceptible and non-susceptible murine cells.</title>
        <authorList>
            <person name="Wilson C.A."/>
            <person name="Farrell K.B."/>
            <person name="Eiden M.V."/>
        </authorList>
    </citation>
    <scope>NUCLEOTIDE SEQUENCE [MRNA]</scope>
</reference>
<reference key="3">
    <citation type="journal article" date="2000" name="Gene">
        <title>Structure of the murine Pit1 phosphate transporter/retrovirus receptor gene and functional characterization of its promoter region.</title>
        <authorList>
            <person name="Palmer G."/>
            <person name="Manen D."/>
            <person name="Bonjour J.-P."/>
            <person name="Caverzasio J."/>
        </authorList>
    </citation>
    <scope>NUCLEOTIDE SEQUENCE [GENOMIC DNA]</scope>
    <source>
        <strain>129/SvJ</strain>
    </source>
</reference>
<reference key="4">
    <citation type="journal article" date="2005" name="Science">
        <title>The transcriptional landscape of the mammalian genome.</title>
        <authorList>
            <person name="Carninci P."/>
            <person name="Kasukawa T."/>
            <person name="Katayama S."/>
            <person name="Gough J."/>
            <person name="Frith M.C."/>
            <person name="Maeda N."/>
            <person name="Oyama R."/>
            <person name="Ravasi T."/>
            <person name="Lenhard B."/>
            <person name="Wells C."/>
            <person name="Kodzius R."/>
            <person name="Shimokawa K."/>
            <person name="Bajic V.B."/>
            <person name="Brenner S.E."/>
            <person name="Batalov S."/>
            <person name="Forrest A.R."/>
            <person name="Zavolan M."/>
            <person name="Davis M.J."/>
            <person name="Wilming L.G."/>
            <person name="Aidinis V."/>
            <person name="Allen J.E."/>
            <person name="Ambesi-Impiombato A."/>
            <person name="Apweiler R."/>
            <person name="Aturaliya R.N."/>
            <person name="Bailey T.L."/>
            <person name="Bansal M."/>
            <person name="Baxter L."/>
            <person name="Beisel K.W."/>
            <person name="Bersano T."/>
            <person name="Bono H."/>
            <person name="Chalk A.M."/>
            <person name="Chiu K.P."/>
            <person name="Choudhary V."/>
            <person name="Christoffels A."/>
            <person name="Clutterbuck D.R."/>
            <person name="Crowe M.L."/>
            <person name="Dalla E."/>
            <person name="Dalrymple B.P."/>
            <person name="de Bono B."/>
            <person name="Della Gatta G."/>
            <person name="di Bernardo D."/>
            <person name="Down T."/>
            <person name="Engstrom P."/>
            <person name="Fagiolini M."/>
            <person name="Faulkner G."/>
            <person name="Fletcher C.F."/>
            <person name="Fukushima T."/>
            <person name="Furuno M."/>
            <person name="Futaki S."/>
            <person name="Gariboldi M."/>
            <person name="Georgii-Hemming P."/>
            <person name="Gingeras T.R."/>
            <person name="Gojobori T."/>
            <person name="Green R.E."/>
            <person name="Gustincich S."/>
            <person name="Harbers M."/>
            <person name="Hayashi Y."/>
            <person name="Hensch T.K."/>
            <person name="Hirokawa N."/>
            <person name="Hill D."/>
            <person name="Huminiecki L."/>
            <person name="Iacono M."/>
            <person name="Ikeo K."/>
            <person name="Iwama A."/>
            <person name="Ishikawa T."/>
            <person name="Jakt M."/>
            <person name="Kanapin A."/>
            <person name="Katoh M."/>
            <person name="Kawasawa Y."/>
            <person name="Kelso J."/>
            <person name="Kitamura H."/>
            <person name="Kitano H."/>
            <person name="Kollias G."/>
            <person name="Krishnan S.P."/>
            <person name="Kruger A."/>
            <person name="Kummerfeld S.K."/>
            <person name="Kurochkin I.V."/>
            <person name="Lareau L.F."/>
            <person name="Lazarevic D."/>
            <person name="Lipovich L."/>
            <person name="Liu J."/>
            <person name="Liuni S."/>
            <person name="McWilliam S."/>
            <person name="Madan Babu M."/>
            <person name="Madera M."/>
            <person name="Marchionni L."/>
            <person name="Matsuda H."/>
            <person name="Matsuzawa S."/>
            <person name="Miki H."/>
            <person name="Mignone F."/>
            <person name="Miyake S."/>
            <person name="Morris K."/>
            <person name="Mottagui-Tabar S."/>
            <person name="Mulder N."/>
            <person name="Nakano N."/>
            <person name="Nakauchi H."/>
            <person name="Ng P."/>
            <person name="Nilsson R."/>
            <person name="Nishiguchi S."/>
            <person name="Nishikawa S."/>
            <person name="Nori F."/>
            <person name="Ohara O."/>
            <person name="Okazaki Y."/>
            <person name="Orlando V."/>
            <person name="Pang K.C."/>
            <person name="Pavan W.J."/>
            <person name="Pavesi G."/>
            <person name="Pesole G."/>
            <person name="Petrovsky N."/>
            <person name="Piazza S."/>
            <person name="Reed J."/>
            <person name="Reid J.F."/>
            <person name="Ring B.Z."/>
            <person name="Ringwald M."/>
            <person name="Rost B."/>
            <person name="Ruan Y."/>
            <person name="Salzberg S.L."/>
            <person name="Sandelin A."/>
            <person name="Schneider C."/>
            <person name="Schoenbach C."/>
            <person name="Sekiguchi K."/>
            <person name="Semple C.A."/>
            <person name="Seno S."/>
            <person name="Sessa L."/>
            <person name="Sheng Y."/>
            <person name="Shibata Y."/>
            <person name="Shimada H."/>
            <person name="Shimada K."/>
            <person name="Silva D."/>
            <person name="Sinclair B."/>
            <person name="Sperling S."/>
            <person name="Stupka E."/>
            <person name="Sugiura K."/>
            <person name="Sultana R."/>
            <person name="Takenaka Y."/>
            <person name="Taki K."/>
            <person name="Tammoja K."/>
            <person name="Tan S.L."/>
            <person name="Tang S."/>
            <person name="Taylor M.S."/>
            <person name="Tegner J."/>
            <person name="Teichmann S.A."/>
            <person name="Ueda H.R."/>
            <person name="van Nimwegen E."/>
            <person name="Verardo R."/>
            <person name="Wei C.L."/>
            <person name="Yagi K."/>
            <person name="Yamanishi H."/>
            <person name="Zabarovsky E."/>
            <person name="Zhu S."/>
            <person name="Zimmer A."/>
            <person name="Hide W."/>
            <person name="Bult C."/>
            <person name="Grimmond S.M."/>
            <person name="Teasdale R.D."/>
            <person name="Liu E.T."/>
            <person name="Brusic V."/>
            <person name="Quackenbush J."/>
            <person name="Wahlestedt C."/>
            <person name="Mattick J.S."/>
            <person name="Hume D.A."/>
            <person name="Kai C."/>
            <person name="Sasaki D."/>
            <person name="Tomaru Y."/>
            <person name="Fukuda S."/>
            <person name="Kanamori-Katayama M."/>
            <person name="Suzuki M."/>
            <person name="Aoki J."/>
            <person name="Arakawa T."/>
            <person name="Iida J."/>
            <person name="Imamura K."/>
            <person name="Itoh M."/>
            <person name="Kato T."/>
            <person name="Kawaji H."/>
            <person name="Kawagashira N."/>
            <person name="Kawashima T."/>
            <person name="Kojima M."/>
            <person name="Kondo S."/>
            <person name="Konno H."/>
            <person name="Nakano K."/>
            <person name="Ninomiya N."/>
            <person name="Nishio T."/>
            <person name="Okada M."/>
            <person name="Plessy C."/>
            <person name="Shibata K."/>
            <person name="Shiraki T."/>
            <person name="Suzuki S."/>
            <person name="Tagami M."/>
            <person name="Waki K."/>
            <person name="Watahiki A."/>
            <person name="Okamura-Oho Y."/>
            <person name="Suzuki H."/>
            <person name="Kawai J."/>
            <person name="Hayashizaki Y."/>
        </authorList>
    </citation>
    <scope>NUCLEOTIDE SEQUENCE [LARGE SCALE MRNA]</scope>
    <source>
        <strain>NOD</strain>
    </source>
</reference>
<reference key="5">
    <citation type="journal article" date="2009" name="PLoS Biol.">
        <title>Lineage-specific biology revealed by a finished genome assembly of the mouse.</title>
        <authorList>
            <person name="Church D.M."/>
            <person name="Goodstadt L."/>
            <person name="Hillier L.W."/>
            <person name="Zody M.C."/>
            <person name="Goldstein S."/>
            <person name="She X."/>
            <person name="Bult C.J."/>
            <person name="Agarwala R."/>
            <person name="Cherry J.L."/>
            <person name="DiCuccio M."/>
            <person name="Hlavina W."/>
            <person name="Kapustin Y."/>
            <person name="Meric P."/>
            <person name="Maglott D."/>
            <person name="Birtle Z."/>
            <person name="Marques A.C."/>
            <person name="Graves T."/>
            <person name="Zhou S."/>
            <person name="Teague B."/>
            <person name="Potamousis K."/>
            <person name="Churas C."/>
            <person name="Place M."/>
            <person name="Herschleb J."/>
            <person name="Runnheim R."/>
            <person name="Forrest D."/>
            <person name="Amos-Landgraf J."/>
            <person name="Schwartz D.C."/>
            <person name="Cheng Z."/>
            <person name="Lindblad-Toh K."/>
            <person name="Eichler E.E."/>
            <person name="Ponting C.P."/>
        </authorList>
    </citation>
    <scope>NUCLEOTIDE SEQUENCE [LARGE SCALE GENOMIC DNA]</scope>
    <source>
        <strain>C57BL/6J</strain>
    </source>
</reference>
<reference key="6">
    <citation type="journal article" date="2004" name="Genome Res.">
        <title>The status, quality, and expansion of the NIH full-length cDNA project: the Mammalian Gene Collection (MGC).</title>
        <authorList>
            <consortium name="The MGC Project Team"/>
        </authorList>
    </citation>
    <scope>NUCLEOTIDE SEQUENCE [LARGE SCALE MRNA]</scope>
    <source>
        <strain>Czech II</strain>
        <tissue>Mammary tumor</tissue>
    </source>
</reference>
<reference key="7">
    <citation type="journal article" date="1992" name="J. Virol.">
        <title>Feline leukemia virus subgroup B uses the same cell surface receptor as gibbon ape leukemia virus.</title>
        <authorList>
            <person name="Takeuchi Y."/>
            <person name="Vile R.G."/>
            <person name="Simpson G."/>
            <person name="O'Hara B."/>
            <person name="Collins M.K."/>
            <person name="Weiss R.A."/>
        </authorList>
    </citation>
    <scope>FUNCTION (MICROBIAL INFECTION)</scope>
</reference>
<reference key="8">
    <citation type="journal article" date="1993" name="J. Virol.">
        <title>Definition of a domain of GLVR1 which is necessary for infection by gibbon ape leukemia virus and which is highly polymorphic between species.</title>
        <authorList>
            <person name="Johann S.V."/>
            <person name="van Zeijl M."/>
            <person name="Cekleniak J."/>
            <person name="O'Hara B."/>
        </authorList>
    </citation>
    <scope>MUTAGENESIS OF 553-LYS--ALA-560; 553-LYS--GLU-555 AND LYS-553</scope>
    <scope>REGION</scope>
</reference>
<reference key="9">
    <citation type="journal article" date="1998" name="Am. J. Physiol.">
        <title>Differential expression, abundance, and regulation of Na+-phosphate cotransporter genes in murine kidney.</title>
        <authorList>
            <person name="Tenenhouse H.S."/>
            <person name="Roy S."/>
            <person name="Martel J."/>
            <person name="Gauthier C."/>
        </authorList>
    </citation>
    <scope>INDUCTION</scope>
    <scope>TISSUE SPECIFICITY</scope>
</reference>
<reference key="10">
    <citation type="journal article" date="1999" name="Bone">
        <title>In vivo expression of transcripts encoding the Glvr-1 phosphate transporter/retrovirus receptor during bone development.</title>
        <authorList>
            <person name="Palmer G."/>
            <person name="Zhao J."/>
            <person name="Bonjour J.-P."/>
            <person name="Hofstetter W."/>
            <person name="Caverzasio J."/>
        </authorList>
    </citation>
    <scope>TISSUE SPECIFICITY</scope>
    <scope>DEVELOPMENTAL STAGE</scope>
</reference>
<reference key="11">
    <citation type="journal article" date="2002" name="J. Virol.">
        <title>Reassessing the role of region A in Pit1-mediated viral entry.</title>
        <authorList>
            <person name="Farrell K.B."/>
            <person name="Russ J.L."/>
            <person name="Murthy R.K."/>
            <person name="Eiden M.V."/>
        </authorList>
    </citation>
    <scope>FUNCTION (MICROBIAL INFECTION)</scope>
    <scope>REGION</scope>
</reference>
<reference key="12">
    <citation type="journal article" date="2009" name="Immunity">
        <title>The phagosomal proteome in interferon-gamma-activated macrophages.</title>
        <authorList>
            <person name="Trost M."/>
            <person name="English L."/>
            <person name="Lemieux S."/>
            <person name="Courcelles M."/>
            <person name="Desjardins M."/>
            <person name="Thibault P."/>
        </authorList>
    </citation>
    <scope>PHOSPHORYLATION [LARGE SCALE ANALYSIS] AT SER-269 AND SER-273</scope>
    <scope>IDENTIFICATION BY MASS SPECTROMETRY [LARGE SCALE ANALYSIS]</scope>
</reference>
<reference key="13">
    <citation type="journal article" date="2010" name="Cell">
        <title>A tissue-specific atlas of mouse protein phosphorylation and expression.</title>
        <authorList>
            <person name="Huttlin E.L."/>
            <person name="Jedrychowski M.P."/>
            <person name="Elias J.E."/>
            <person name="Goswami T."/>
            <person name="Rad R."/>
            <person name="Beausoleil S.A."/>
            <person name="Villen J."/>
            <person name="Haas W."/>
            <person name="Sowa M.E."/>
            <person name="Gygi S.P."/>
        </authorList>
    </citation>
    <scope>IDENTIFICATION BY MASS SPECTROMETRY [LARGE SCALE ANALYSIS]</scope>
    <source>
        <tissue>Brain</tissue>
    </source>
</reference>
<evidence type="ECO:0000250" key="1">
    <source>
        <dbReference type="UniProtKB" id="Q8WUM9"/>
    </source>
</evidence>
<evidence type="ECO:0000255" key="2"/>
<evidence type="ECO:0000256" key="3">
    <source>
        <dbReference type="SAM" id="MobiDB-lite"/>
    </source>
</evidence>
<evidence type="ECO:0000269" key="4">
    <source>
    </source>
</evidence>
<evidence type="ECO:0000269" key="5">
    <source>
    </source>
</evidence>
<evidence type="ECO:0000269" key="6">
    <source>
    </source>
</evidence>
<evidence type="ECO:0000269" key="7">
    <source>
    </source>
</evidence>
<evidence type="ECO:0000269" key="8">
    <source>
    </source>
</evidence>
<evidence type="ECO:0000305" key="9"/>
<evidence type="ECO:0007744" key="10">
    <source>
    </source>
</evidence>
<organism>
    <name type="scientific">Mus musculus</name>
    <name type="common">Mouse</name>
    <dbReference type="NCBI Taxonomy" id="10090"/>
    <lineage>
        <taxon>Eukaryota</taxon>
        <taxon>Metazoa</taxon>
        <taxon>Chordata</taxon>
        <taxon>Craniata</taxon>
        <taxon>Vertebrata</taxon>
        <taxon>Euteleostomi</taxon>
        <taxon>Mammalia</taxon>
        <taxon>Eutheria</taxon>
        <taxon>Euarchontoglires</taxon>
        <taxon>Glires</taxon>
        <taxon>Rodentia</taxon>
        <taxon>Myomorpha</taxon>
        <taxon>Muroidea</taxon>
        <taxon>Muridae</taxon>
        <taxon>Murinae</taxon>
        <taxon>Mus</taxon>
        <taxon>Mus</taxon>
    </lineage>
</organism>
<comment type="function">
    <text evidence="1">Sodium-phosphate symporter which preferentially transports the monovalent form of phosphate with a stoichiometry of two sodium ions per phosphate ion. May play a role in extracellular matrix and cartilage calcification as well as in vascular calcification. Essential for cell proliferation but this function is independent of its phosphate transporter activity.</text>
</comment>
<comment type="function">
    <text evidence="4 5">(Microbial infection) May function as a retroviral receptor but do not confer infection susceptibility to Gibbon Ape Leukemia Virus (GaLV), Simian sarcoma-associated virus (SSAV) and Feline leukemia virus subgroup B (FeLV-B).</text>
</comment>
<comment type="catalytic activity">
    <reaction evidence="1">
        <text>2 Na(+)(out) + phosphate(out) = 2 Na(+)(in) + phosphate(in)</text>
        <dbReference type="Rhea" id="RHEA:71259"/>
        <dbReference type="ChEBI" id="CHEBI:29101"/>
        <dbReference type="ChEBI" id="CHEBI:43474"/>
    </reaction>
</comment>
<comment type="subcellular location">
    <subcellularLocation>
        <location evidence="1">Cell membrane</location>
        <topology evidence="2">Multi-pass membrane protein</topology>
    </subcellularLocation>
</comment>
<comment type="tissue specificity">
    <text evidence="7 8">Ubiquitously expressed.</text>
</comment>
<comment type="developmental stage">
    <text evidence="8">Detected at 17 dpc of embryonic development in a subpopulation of early hypertrophic chondrocytes in bone, but not when fully differentiated.</text>
</comment>
<comment type="induction">
    <text evidence="7">By growth hormone.</text>
</comment>
<comment type="domain">
    <text>Region A does not confer susceptibility to infection by Gibbon Ape Leukemia Virus (GaLV) and Feline leukemia virus subgroup B (FeLV-B). Substitution of Human SLC20A1 region A by region A of murine SLC20A1 prevents viral infection.</text>
</comment>
<comment type="similarity">
    <text evidence="9">Belongs to the inorganic phosphate transporter (PiT) (TC 2.A.20) family.</text>
</comment>
<comment type="sequence caution" evidence="9">
    <conflict type="miscellaneous discrepancy">
        <sequence resource="EMBL-CDS" id="BAC29234"/>
    </conflict>
    <text>Intron retention. The sequence differs at the 3'end due to intron retention.</text>
</comment>
<protein>
    <recommendedName>
        <fullName>Sodium-dependent phosphate transporter 1</fullName>
    </recommendedName>
    <alternativeName>
        <fullName>Gibbon ape leukemia virus receptor 1</fullName>
        <shortName>GLVR-1</shortName>
    </alternativeName>
    <alternativeName>
        <fullName>Leukemia virus receptor 1 homolog</fullName>
    </alternativeName>
    <alternativeName>
        <fullName>Phosphate transporter 1</fullName>
        <shortName>PiT-1</shortName>
    </alternativeName>
    <alternativeName>
        <fullName>Solute carrier family 20 member 1</fullName>
    </alternativeName>
</protein>
<accession>Q61609</accession>
<accession>A2AKR9</accession>
<accession>Q3U244</accession>
<accession>Q8CBJ1</accession>
<accession>Q91YQ9</accession>
<accession>Q9QVW6</accession>
<sequence>MESTVATITSTLAAVTASAPPKYDNLWMLILGFIIAFVLAFSVGANDVANSFGTAVGSGVVTLKQACILASIFETVGSALLGAKVSETIRNGLIDVELYNETQDLLMAGSVSAMFGSAVWQLVASFLKLPISGTHCIVGATIGFSLVANGQKGVKWSELIKIVMSWFVSPLLSGIMSGILFFLVRAFILRKADPVPNGLRALPIFYACTIGINLFSIMYTGAPLLGFDKLPLWGTILISVGCAVFCALIVWFFVCPRMKRKIEREVKSSPSESPLMEKKSNLKEDHEETKMAPGDVEHRNPVSEVVCATGPLRAVVEERTVSFKLGDLEEAPERERLPMDLKEETSIDSTINGAVQLPNGNLVQFSQTVSNQINSSGHYQYHTVHKDSGLYKELLHKLHLAKVGDCMGDSGDKPLRRNNSYTSYTMAICGMPLDSFRAKEGEQKGDEMETLTWPNADTKKRIRMDSYTSYCNAVSDLHSESEMDMSVKAEMGLGDRKGSSGSLEEWYDQDKPEVSLLFQFLQILTACFGSFAHGGNDVSNAIGPLVALYLVYKQEASTKAATPIWLLLYGGVGICMGLWVWGRRVIQTMGKDLTPITPSSGFSIELASALTVVIASNIGLPISTTHCKVGSVVSVGWLRSKKAVDWRLFRNIFMAWFVTVPISGVISAAIMAVFKYIILPV</sequence>
<keyword id="KW-1003">Cell membrane</keyword>
<keyword id="KW-0472">Membrane</keyword>
<keyword id="KW-0592">Phosphate transport</keyword>
<keyword id="KW-0597">Phosphoprotein</keyword>
<keyword id="KW-0675">Receptor</keyword>
<keyword id="KW-1185">Reference proteome</keyword>
<keyword id="KW-0769">Symport</keyword>
<keyword id="KW-0812">Transmembrane</keyword>
<keyword id="KW-1133">Transmembrane helix</keyword>
<keyword id="KW-0813">Transport</keyword>
<gene>
    <name type="primary">Slc20a1</name>
    <name type="synonym">Glvr1</name>
    <name type="synonym">Pit1</name>
</gene>
<name>S20A1_MOUSE</name>